<name>NDHK_BRADI</name>
<organism>
    <name type="scientific">Brachypodium distachyon</name>
    <name type="common">Purple false brome</name>
    <name type="synonym">Trachynia distachya</name>
    <dbReference type="NCBI Taxonomy" id="15368"/>
    <lineage>
        <taxon>Eukaryota</taxon>
        <taxon>Viridiplantae</taxon>
        <taxon>Streptophyta</taxon>
        <taxon>Embryophyta</taxon>
        <taxon>Tracheophyta</taxon>
        <taxon>Spermatophyta</taxon>
        <taxon>Magnoliopsida</taxon>
        <taxon>Liliopsida</taxon>
        <taxon>Poales</taxon>
        <taxon>Poaceae</taxon>
        <taxon>BOP clade</taxon>
        <taxon>Pooideae</taxon>
        <taxon>Stipodae</taxon>
        <taxon>Brachypodieae</taxon>
        <taxon>Brachypodium</taxon>
    </lineage>
</organism>
<keyword id="KW-0004">4Fe-4S</keyword>
<keyword id="KW-0150">Chloroplast</keyword>
<keyword id="KW-0408">Iron</keyword>
<keyword id="KW-0411">Iron-sulfur</keyword>
<keyword id="KW-0472">Membrane</keyword>
<keyword id="KW-0479">Metal-binding</keyword>
<keyword id="KW-0520">NAD</keyword>
<keyword id="KW-0521">NADP</keyword>
<keyword id="KW-0934">Plastid</keyword>
<keyword id="KW-0618">Plastoquinone</keyword>
<keyword id="KW-0874">Quinone</keyword>
<keyword id="KW-1185">Reference proteome</keyword>
<keyword id="KW-0793">Thylakoid</keyword>
<keyword id="KW-1278">Translocase</keyword>
<keyword id="KW-0813">Transport</keyword>
<gene>
    <name evidence="1" type="primary">ndhK</name>
</gene>
<comment type="function">
    <text evidence="1">NDH shuttles electrons from NAD(P)H:plastoquinone, via FMN and iron-sulfur (Fe-S) centers, to quinones in the photosynthetic chain and possibly in a chloroplast respiratory chain. The immediate electron acceptor for the enzyme in this species is believed to be plastoquinone. Couples the redox reaction to proton translocation, and thus conserves the redox energy in a proton gradient.</text>
</comment>
<comment type="catalytic activity">
    <reaction evidence="1">
        <text>a plastoquinone + NADH + (n+1) H(+)(in) = a plastoquinol + NAD(+) + n H(+)(out)</text>
        <dbReference type="Rhea" id="RHEA:42608"/>
        <dbReference type="Rhea" id="RHEA-COMP:9561"/>
        <dbReference type="Rhea" id="RHEA-COMP:9562"/>
        <dbReference type="ChEBI" id="CHEBI:15378"/>
        <dbReference type="ChEBI" id="CHEBI:17757"/>
        <dbReference type="ChEBI" id="CHEBI:57540"/>
        <dbReference type="ChEBI" id="CHEBI:57945"/>
        <dbReference type="ChEBI" id="CHEBI:62192"/>
    </reaction>
</comment>
<comment type="catalytic activity">
    <reaction evidence="1">
        <text>a plastoquinone + NADPH + (n+1) H(+)(in) = a plastoquinol + NADP(+) + n H(+)(out)</text>
        <dbReference type="Rhea" id="RHEA:42612"/>
        <dbReference type="Rhea" id="RHEA-COMP:9561"/>
        <dbReference type="Rhea" id="RHEA-COMP:9562"/>
        <dbReference type="ChEBI" id="CHEBI:15378"/>
        <dbReference type="ChEBI" id="CHEBI:17757"/>
        <dbReference type="ChEBI" id="CHEBI:57783"/>
        <dbReference type="ChEBI" id="CHEBI:58349"/>
        <dbReference type="ChEBI" id="CHEBI:62192"/>
    </reaction>
</comment>
<comment type="cofactor">
    <cofactor evidence="1">
        <name>[4Fe-4S] cluster</name>
        <dbReference type="ChEBI" id="CHEBI:49883"/>
    </cofactor>
    <text evidence="1">Binds 1 [4Fe-4S] cluster.</text>
</comment>
<comment type="subunit">
    <text evidence="1">NDH is composed of at least 16 different subunits, 5 of which are encoded in the nucleus.</text>
</comment>
<comment type="subcellular location">
    <subcellularLocation>
        <location evidence="1">Plastid</location>
        <location evidence="1">Chloroplast thylakoid membrane</location>
        <topology evidence="1">Peripheral membrane protein</topology>
        <orientation evidence="1">Stromal side</orientation>
    </subcellularLocation>
</comment>
<comment type="similarity">
    <text evidence="1">Belongs to the complex I 20 kDa subunit family.</text>
</comment>
<comment type="sequence caution" evidence="2">
    <conflict type="erroneous initiation">
        <sequence resource="EMBL-CDS" id="ACF08644"/>
    </conflict>
</comment>
<accession>B3TN55</accession>
<dbReference type="EC" id="7.1.1.-" evidence="1"/>
<dbReference type="EMBL" id="EU325680">
    <property type="protein sequence ID" value="ACF08644.1"/>
    <property type="status" value="ALT_INIT"/>
    <property type="molecule type" value="Genomic_DNA"/>
</dbReference>
<dbReference type="RefSeq" id="YP_002000491.1">
    <property type="nucleotide sequence ID" value="NC_011032.1"/>
</dbReference>
<dbReference type="SMR" id="B3TN55"/>
<dbReference type="FunCoup" id="B3TN55">
    <property type="interactions" value="76"/>
</dbReference>
<dbReference type="STRING" id="15368.B3TN55"/>
<dbReference type="GeneID" id="6439869"/>
<dbReference type="KEGG" id="bdi:6439869"/>
<dbReference type="eggNOG" id="KOG1687">
    <property type="taxonomic scope" value="Eukaryota"/>
</dbReference>
<dbReference type="InParanoid" id="B3TN55"/>
<dbReference type="Proteomes" id="UP000008810">
    <property type="component" value="Chloroplast"/>
</dbReference>
<dbReference type="GO" id="GO:0009535">
    <property type="term" value="C:chloroplast thylakoid membrane"/>
    <property type="evidence" value="ECO:0007669"/>
    <property type="project" value="UniProtKB-SubCell"/>
</dbReference>
<dbReference type="GO" id="GO:0045271">
    <property type="term" value="C:respiratory chain complex I"/>
    <property type="evidence" value="ECO:0000318"/>
    <property type="project" value="GO_Central"/>
</dbReference>
<dbReference type="GO" id="GO:0051539">
    <property type="term" value="F:4 iron, 4 sulfur cluster binding"/>
    <property type="evidence" value="ECO:0007669"/>
    <property type="project" value="UniProtKB-KW"/>
</dbReference>
<dbReference type="GO" id="GO:0005506">
    <property type="term" value="F:iron ion binding"/>
    <property type="evidence" value="ECO:0007669"/>
    <property type="project" value="UniProtKB-UniRule"/>
</dbReference>
<dbReference type="GO" id="GO:0008137">
    <property type="term" value="F:NADH dehydrogenase (ubiquinone) activity"/>
    <property type="evidence" value="ECO:0000318"/>
    <property type="project" value="GO_Central"/>
</dbReference>
<dbReference type="GO" id="GO:0048038">
    <property type="term" value="F:quinone binding"/>
    <property type="evidence" value="ECO:0007669"/>
    <property type="project" value="UniProtKB-KW"/>
</dbReference>
<dbReference type="GO" id="GO:0009060">
    <property type="term" value="P:aerobic respiration"/>
    <property type="evidence" value="ECO:0000318"/>
    <property type="project" value="GO_Central"/>
</dbReference>
<dbReference type="GO" id="GO:0015990">
    <property type="term" value="P:electron transport coupled proton transport"/>
    <property type="evidence" value="ECO:0000318"/>
    <property type="project" value="GO_Central"/>
</dbReference>
<dbReference type="GO" id="GO:0019684">
    <property type="term" value="P:photosynthesis, light reaction"/>
    <property type="evidence" value="ECO:0007669"/>
    <property type="project" value="UniProtKB-UniRule"/>
</dbReference>
<dbReference type="FunFam" id="3.40.50.12280:FF:000003">
    <property type="entry name" value="NAD(P)H-quinone oxidoreductase subunit K, chloroplastic"/>
    <property type="match status" value="1"/>
</dbReference>
<dbReference type="Gene3D" id="3.40.50.12280">
    <property type="match status" value="1"/>
</dbReference>
<dbReference type="HAMAP" id="MF_01356">
    <property type="entry name" value="NDH1_NuoB"/>
    <property type="match status" value="1"/>
</dbReference>
<dbReference type="InterPro" id="IPR006137">
    <property type="entry name" value="NADH_UbQ_OxRdtase-like_20kDa"/>
</dbReference>
<dbReference type="InterPro" id="IPR006138">
    <property type="entry name" value="NADH_UQ_OxRdtase_20Kd_su"/>
</dbReference>
<dbReference type="NCBIfam" id="TIGR01957">
    <property type="entry name" value="nuoB_fam"/>
    <property type="match status" value="1"/>
</dbReference>
<dbReference type="NCBIfam" id="NF005012">
    <property type="entry name" value="PRK06411.1"/>
    <property type="match status" value="1"/>
</dbReference>
<dbReference type="PANTHER" id="PTHR11995">
    <property type="entry name" value="NADH DEHYDROGENASE"/>
    <property type="match status" value="1"/>
</dbReference>
<dbReference type="PANTHER" id="PTHR11995:SF14">
    <property type="entry name" value="NADH DEHYDROGENASE [UBIQUINONE] IRON-SULFUR PROTEIN 7, MITOCHONDRIAL"/>
    <property type="match status" value="1"/>
</dbReference>
<dbReference type="Pfam" id="PF01058">
    <property type="entry name" value="Oxidored_q6"/>
    <property type="match status" value="1"/>
</dbReference>
<dbReference type="SUPFAM" id="SSF56770">
    <property type="entry name" value="HydA/Nqo6-like"/>
    <property type="match status" value="1"/>
</dbReference>
<dbReference type="PROSITE" id="PS01150">
    <property type="entry name" value="COMPLEX1_20K"/>
    <property type="match status" value="1"/>
</dbReference>
<evidence type="ECO:0000255" key="1">
    <source>
        <dbReference type="HAMAP-Rule" id="MF_01356"/>
    </source>
</evidence>
<evidence type="ECO:0000305" key="2"/>
<feature type="chain" id="PRO_0000358523" description="NAD(P)H-quinone oxidoreductase subunit K, chloroplastic">
    <location>
        <begin position="1"/>
        <end position="225"/>
    </location>
</feature>
<feature type="binding site" evidence="1">
    <location>
        <position position="43"/>
    </location>
    <ligand>
        <name>[4Fe-4S] cluster</name>
        <dbReference type="ChEBI" id="CHEBI:49883"/>
    </ligand>
</feature>
<feature type="binding site" evidence="1">
    <location>
        <position position="44"/>
    </location>
    <ligand>
        <name>[4Fe-4S] cluster</name>
        <dbReference type="ChEBI" id="CHEBI:49883"/>
    </ligand>
</feature>
<feature type="binding site" evidence="1">
    <location>
        <position position="108"/>
    </location>
    <ligand>
        <name>[4Fe-4S] cluster</name>
        <dbReference type="ChEBI" id="CHEBI:49883"/>
    </ligand>
</feature>
<feature type="binding site" evidence="1">
    <location>
        <position position="139"/>
    </location>
    <ligand>
        <name>[4Fe-4S] cluster</name>
        <dbReference type="ChEBI" id="CHEBI:49883"/>
    </ligand>
</feature>
<sequence>MSLIEFPLLDQTSSNSVISTTPNDLSNWSRLSSLWPLLYGTSCCFIEFASLIGSRFDFDRYGLVPRSSPRQADLILTAGTVTMKMAPSLVRLYEQMPEPKYVIAMGACTITGGMFSTDSYSTVRGVDKLIPVDVYLPGCPPKPEAVIDALTKLRKKISREIVEDRIRSQNKNRCFTTSHKLYVRRSTHTGTYEQELLYQSPSTLDISSENFYKSKSIVPSYKLVN</sequence>
<reference key="1">
    <citation type="journal article" date="2008" name="BMC Res. Notes">
        <title>The complete chloroplast genome sequence of Brachypodium distachyon: sequence comparison and phylogenetic analysis of eight grass plastomes.</title>
        <authorList>
            <person name="Bortiri E."/>
            <person name="Coleman-Derr D."/>
            <person name="Lazo G.R."/>
            <person name="Anderson O.D."/>
            <person name="Gu Y.Q."/>
        </authorList>
    </citation>
    <scope>NUCLEOTIDE SEQUENCE [LARGE SCALE GENOMIC DNA]</scope>
    <source>
        <strain>cv. Bd21</strain>
    </source>
</reference>
<protein>
    <recommendedName>
        <fullName evidence="1">NAD(P)H-quinone oxidoreductase subunit K, chloroplastic</fullName>
        <ecNumber evidence="1">7.1.1.-</ecNumber>
    </recommendedName>
    <alternativeName>
        <fullName evidence="1">NAD(P)H dehydrogenase subunit K</fullName>
    </alternativeName>
    <alternativeName>
        <fullName evidence="1">NADH-plastoquinone oxidoreductase subunit K</fullName>
    </alternativeName>
</protein>
<geneLocation type="chloroplast"/>
<proteinExistence type="inferred from homology"/>